<feature type="chain" id="PRO_0000280977" description="Succinate dehydrogenase flavoprotein subunit">
    <location>
        <begin position="1"/>
        <end position="596"/>
    </location>
</feature>
<feature type="active site" description="Proton acceptor" evidence="1">
    <location>
        <position position="290"/>
    </location>
</feature>
<feature type="binding site" evidence="1">
    <location>
        <begin position="18"/>
        <end position="23"/>
    </location>
    <ligand>
        <name>FAD</name>
        <dbReference type="ChEBI" id="CHEBI:57692"/>
    </ligand>
</feature>
<feature type="binding site" evidence="1">
    <location>
        <begin position="41"/>
        <end position="56"/>
    </location>
    <ligand>
        <name>FAD</name>
        <dbReference type="ChEBI" id="CHEBI:57692"/>
    </ligand>
</feature>
<feature type="binding site" evidence="1">
    <location>
        <position position="225"/>
    </location>
    <ligand>
        <name>FAD</name>
        <dbReference type="ChEBI" id="CHEBI:57692"/>
    </ligand>
</feature>
<feature type="binding site" evidence="1">
    <location>
        <position position="246"/>
    </location>
    <ligand>
        <name>substrate</name>
    </ligand>
</feature>
<feature type="binding site" evidence="1">
    <location>
        <position position="258"/>
    </location>
    <ligand>
        <name>substrate</name>
    </ligand>
</feature>
<feature type="binding site" evidence="1">
    <location>
        <position position="357"/>
    </location>
    <ligand>
        <name>substrate</name>
    </ligand>
</feature>
<feature type="binding site" evidence="1">
    <location>
        <position position="391"/>
    </location>
    <ligand>
        <name>FAD</name>
        <dbReference type="ChEBI" id="CHEBI:57692"/>
    </ligand>
</feature>
<feature type="binding site" evidence="1">
    <location>
        <position position="402"/>
    </location>
    <ligand>
        <name>substrate</name>
    </ligand>
</feature>
<feature type="binding site" evidence="1">
    <location>
        <begin position="407"/>
        <end position="408"/>
    </location>
    <ligand>
        <name>FAD</name>
        <dbReference type="ChEBI" id="CHEBI:57692"/>
    </ligand>
</feature>
<feature type="modified residue" description="Tele-8alpha-FAD histidine" evidence="1">
    <location>
        <position position="49"/>
    </location>
</feature>
<accession>Q4UJM1</accession>
<gene>
    <name type="primary">sdhA</name>
    <name type="ordered locus">RF_1159</name>
</gene>
<protein>
    <recommendedName>
        <fullName>Succinate dehydrogenase flavoprotein subunit</fullName>
        <ecNumber evidence="1">1.3.5.1</ecNumber>
    </recommendedName>
</protein>
<sequence length="596" mass="65130">MTKAYNIIHHKFDVVVVGAGGAGLRSAFGMAKEGLNTACITKLFPTRSHTVAAQGGISAALGNMGEDDWRWHMYDTVKGSDWLGDQDAIEYMCKNAPDAILELEHYGVPFSRTEEGKIYQRPFGGMTTEYGKGKAAQRTCAAADRTGHAILHTLYQQSLKHKVQFFVEYFAIDLLMEDGECRGVVVWNLDDGTLHCFRAHNVVLATGGYGRAYFSATSAHTCTGDGGGMAIRAGLPLQDMEFVQFHPTGIYSAGCLITEGARGEGGYLVNANGERFMERYAPAAKDLASRDVVSRAMTIEIREGRGVGEHKDHVFLHLNHLSPEILHSRLPGISETAKIFAGVDVTKEPIPVLPTVHYNMGGIPTNYHGQVIIKDGTNHNSVVKGLMAIGEAACVSVHGANRLGSNSLLDLVVFGRSSALKAAELISPASPHKPIKEASLEKIINRFDKVRHANGNILVADLRLKMQRTMQSHASVFRTQEVLDEGAGMISEIRNGYKDIKINDKSLIWNSDLVEALELDNLLDQALVTVYSAAARKESRGAHAREDYPDRNDGDWMKHTLSSIDEAGKIVIDYKPVTLTTLTDEISAIPPAKRVY</sequence>
<proteinExistence type="inferred from homology"/>
<dbReference type="EC" id="1.3.5.1" evidence="1"/>
<dbReference type="EMBL" id="CP000053">
    <property type="protein sequence ID" value="AAY62010.1"/>
    <property type="molecule type" value="Genomic_DNA"/>
</dbReference>
<dbReference type="SMR" id="Q4UJM1"/>
<dbReference type="STRING" id="315456.RF_1159"/>
<dbReference type="KEGG" id="rfe:RF_1159"/>
<dbReference type="eggNOG" id="COG1053">
    <property type="taxonomic scope" value="Bacteria"/>
</dbReference>
<dbReference type="HOGENOM" id="CLU_014312_6_1_5"/>
<dbReference type="OrthoDB" id="9806724at2"/>
<dbReference type="UniPathway" id="UPA00223">
    <property type="reaction ID" value="UER01005"/>
</dbReference>
<dbReference type="Proteomes" id="UP000008548">
    <property type="component" value="Chromosome"/>
</dbReference>
<dbReference type="GO" id="GO:0005886">
    <property type="term" value="C:plasma membrane"/>
    <property type="evidence" value="ECO:0007669"/>
    <property type="project" value="UniProtKB-SubCell"/>
</dbReference>
<dbReference type="GO" id="GO:0009055">
    <property type="term" value="F:electron transfer activity"/>
    <property type="evidence" value="ECO:0007669"/>
    <property type="project" value="TreeGrafter"/>
</dbReference>
<dbReference type="GO" id="GO:0050660">
    <property type="term" value="F:flavin adenine dinucleotide binding"/>
    <property type="evidence" value="ECO:0007669"/>
    <property type="project" value="InterPro"/>
</dbReference>
<dbReference type="GO" id="GO:0008177">
    <property type="term" value="F:succinate dehydrogenase (quinone) activity"/>
    <property type="evidence" value="ECO:0007669"/>
    <property type="project" value="UniProtKB-EC"/>
</dbReference>
<dbReference type="GO" id="GO:0022900">
    <property type="term" value="P:electron transport chain"/>
    <property type="evidence" value="ECO:0007669"/>
    <property type="project" value="InterPro"/>
</dbReference>
<dbReference type="GO" id="GO:0006099">
    <property type="term" value="P:tricarboxylic acid cycle"/>
    <property type="evidence" value="ECO:0007669"/>
    <property type="project" value="UniProtKB-UniPathway"/>
</dbReference>
<dbReference type="FunFam" id="3.90.700.10:FF:000001">
    <property type="entry name" value="Mitochondrial succinate dehydrogenase flavoprotein subunit"/>
    <property type="match status" value="1"/>
</dbReference>
<dbReference type="FunFam" id="4.10.80.40:FF:000002">
    <property type="entry name" value="Succinate dehydrogenase [ubiquinone] flavoprotein subunit, mitochondrial"/>
    <property type="match status" value="1"/>
</dbReference>
<dbReference type="FunFam" id="3.50.50.60:FF:000026">
    <property type="entry name" value="Succinate dehydrogenase flavoprotein subunit"/>
    <property type="match status" value="1"/>
</dbReference>
<dbReference type="FunFam" id="1.20.58.100:FF:000001">
    <property type="entry name" value="Succinate dehydrogenase flavoprotein subunit (SdhA)"/>
    <property type="match status" value="1"/>
</dbReference>
<dbReference type="Gene3D" id="3.50.50.60">
    <property type="entry name" value="FAD/NAD(P)-binding domain"/>
    <property type="match status" value="1"/>
</dbReference>
<dbReference type="Gene3D" id="1.20.58.100">
    <property type="entry name" value="Fumarate reductase/succinate dehydrogenase flavoprotein-like, C-terminal domain"/>
    <property type="match status" value="1"/>
</dbReference>
<dbReference type="Gene3D" id="4.10.80.40">
    <property type="entry name" value="succinate dehydrogenase protein domain"/>
    <property type="match status" value="1"/>
</dbReference>
<dbReference type="Gene3D" id="3.90.700.10">
    <property type="entry name" value="Succinate dehydrogenase/fumarate reductase flavoprotein, catalytic domain"/>
    <property type="match status" value="1"/>
</dbReference>
<dbReference type="InterPro" id="IPR003953">
    <property type="entry name" value="FAD-dep_OxRdtase_2_FAD-bd"/>
</dbReference>
<dbReference type="InterPro" id="IPR036188">
    <property type="entry name" value="FAD/NAD-bd_sf"/>
</dbReference>
<dbReference type="InterPro" id="IPR003952">
    <property type="entry name" value="FRD_SDH_FAD_BS"/>
</dbReference>
<dbReference type="InterPro" id="IPR037099">
    <property type="entry name" value="Fum_R/Succ_DH_flav-like_C_sf"/>
</dbReference>
<dbReference type="InterPro" id="IPR015939">
    <property type="entry name" value="Fum_Rdtase/Succ_DH_flav-like_C"/>
</dbReference>
<dbReference type="InterPro" id="IPR030664">
    <property type="entry name" value="SdhA/FrdA/AprA"/>
</dbReference>
<dbReference type="InterPro" id="IPR027477">
    <property type="entry name" value="Succ_DH/fumarate_Rdtase_cat_sf"/>
</dbReference>
<dbReference type="InterPro" id="IPR011281">
    <property type="entry name" value="Succ_DH_flav_su_fwd"/>
</dbReference>
<dbReference type="InterPro" id="IPR014006">
    <property type="entry name" value="Succ_Dhase_FrdA_Gneg"/>
</dbReference>
<dbReference type="NCBIfam" id="TIGR01816">
    <property type="entry name" value="sdhA_forward"/>
    <property type="match status" value="1"/>
</dbReference>
<dbReference type="NCBIfam" id="TIGR01812">
    <property type="entry name" value="sdhA_frdA_Gneg"/>
    <property type="match status" value="1"/>
</dbReference>
<dbReference type="PANTHER" id="PTHR11632">
    <property type="entry name" value="SUCCINATE DEHYDROGENASE 2 FLAVOPROTEIN SUBUNIT"/>
    <property type="match status" value="1"/>
</dbReference>
<dbReference type="PANTHER" id="PTHR11632:SF51">
    <property type="entry name" value="SUCCINATE DEHYDROGENASE [UBIQUINONE] FLAVOPROTEIN SUBUNIT, MITOCHONDRIAL"/>
    <property type="match status" value="1"/>
</dbReference>
<dbReference type="Pfam" id="PF00890">
    <property type="entry name" value="FAD_binding_2"/>
    <property type="match status" value="1"/>
</dbReference>
<dbReference type="Pfam" id="PF02910">
    <property type="entry name" value="Succ_DH_flav_C"/>
    <property type="match status" value="1"/>
</dbReference>
<dbReference type="PIRSF" id="PIRSF000171">
    <property type="entry name" value="SDHA_APRA_LASPO"/>
    <property type="match status" value="1"/>
</dbReference>
<dbReference type="SUPFAM" id="SSF51905">
    <property type="entry name" value="FAD/NAD(P)-binding domain"/>
    <property type="match status" value="1"/>
</dbReference>
<dbReference type="SUPFAM" id="SSF46977">
    <property type="entry name" value="Succinate dehydrogenase/fumarate reductase flavoprotein C-terminal domain"/>
    <property type="match status" value="1"/>
</dbReference>
<dbReference type="SUPFAM" id="SSF56425">
    <property type="entry name" value="Succinate dehydrogenase/fumarate reductase flavoprotein, catalytic domain"/>
    <property type="match status" value="1"/>
</dbReference>
<dbReference type="PROSITE" id="PS00504">
    <property type="entry name" value="FRD_SDH_FAD_BINDING"/>
    <property type="match status" value="1"/>
</dbReference>
<organism>
    <name type="scientific">Rickettsia felis (strain ATCC VR-1525 / URRWXCal2)</name>
    <name type="common">Rickettsia azadi</name>
    <dbReference type="NCBI Taxonomy" id="315456"/>
    <lineage>
        <taxon>Bacteria</taxon>
        <taxon>Pseudomonadati</taxon>
        <taxon>Pseudomonadota</taxon>
        <taxon>Alphaproteobacteria</taxon>
        <taxon>Rickettsiales</taxon>
        <taxon>Rickettsiaceae</taxon>
        <taxon>Rickettsieae</taxon>
        <taxon>Rickettsia</taxon>
        <taxon>spotted fever group</taxon>
    </lineage>
</organism>
<reference key="1">
    <citation type="journal article" date="2005" name="PLoS Biol.">
        <title>The genome sequence of Rickettsia felis identifies the first putative conjugative plasmid in an obligate intracellular parasite.</title>
        <authorList>
            <person name="Ogata H."/>
            <person name="Renesto P."/>
            <person name="Audic S."/>
            <person name="Robert C."/>
            <person name="Blanc G."/>
            <person name="Fournier P.-E."/>
            <person name="Parinello H."/>
            <person name="Claverie J.-M."/>
            <person name="Raoult D."/>
        </authorList>
    </citation>
    <scope>NUCLEOTIDE SEQUENCE [LARGE SCALE GENOMIC DNA]</scope>
    <source>
        <strain>ATCC VR-1525 / URRWXCal2</strain>
    </source>
</reference>
<name>SDHA_RICFE</name>
<comment type="catalytic activity">
    <reaction evidence="1">
        <text>a quinone + succinate = fumarate + a quinol</text>
        <dbReference type="Rhea" id="RHEA:40523"/>
        <dbReference type="ChEBI" id="CHEBI:24646"/>
        <dbReference type="ChEBI" id="CHEBI:29806"/>
        <dbReference type="ChEBI" id="CHEBI:30031"/>
        <dbReference type="ChEBI" id="CHEBI:132124"/>
        <dbReference type="EC" id="1.3.5.1"/>
    </reaction>
</comment>
<comment type="cofactor">
    <cofactor evidence="1">
        <name>FAD</name>
        <dbReference type="ChEBI" id="CHEBI:57692"/>
    </cofactor>
</comment>
<comment type="pathway">
    <text evidence="1">Carbohydrate metabolism; tricarboxylic acid cycle; fumarate from succinate (bacterial route): step 1/1.</text>
</comment>
<comment type="subunit">
    <text evidence="1">Part of an enzyme complex containing four subunits: a flavoprotein, an iron-sulfur, cytochrome b-556, and a hydrophobic anchor protein.</text>
</comment>
<comment type="subcellular location">
    <subcellularLocation>
        <location evidence="1">Cell inner membrane</location>
        <topology evidence="1">Peripheral membrane protein</topology>
        <orientation evidence="1">Cytoplasmic side</orientation>
    </subcellularLocation>
</comment>
<comment type="similarity">
    <text evidence="2">Belongs to the FAD-dependent oxidoreductase 2 family. FRD/SDH subfamily.</text>
</comment>
<keyword id="KW-0997">Cell inner membrane</keyword>
<keyword id="KW-1003">Cell membrane</keyword>
<keyword id="KW-0249">Electron transport</keyword>
<keyword id="KW-0274">FAD</keyword>
<keyword id="KW-0285">Flavoprotein</keyword>
<keyword id="KW-0472">Membrane</keyword>
<keyword id="KW-0560">Oxidoreductase</keyword>
<keyword id="KW-0813">Transport</keyword>
<keyword id="KW-0816">Tricarboxylic acid cycle</keyword>
<evidence type="ECO:0000250" key="1">
    <source>
        <dbReference type="UniProtKB" id="P0AC41"/>
    </source>
</evidence>
<evidence type="ECO:0000305" key="2"/>